<proteinExistence type="evidence at protein level"/>
<organism>
    <name type="scientific">Equus caballus</name>
    <name type="common">Horse</name>
    <dbReference type="NCBI Taxonomy" id="9796"/>
    <lineage>
        <taxon>Eukaryota</taxon>
        <taxon>Metazoa</taxon>
        <taxon>Chordata</taxon>
        <taxon>Craniata</taxon>
        <taxon>Vertebrata</taxon>
        <taxon>Euteleostomi</taxon>
        <taxon>Mammalia</taxon>
        <taxon>Eutheria</taxon>
        <taxon>Laurasiatheria</taxon>
        <taxon>Perissodactyla</taxon>
        <taxon>Equidae</taxon>
        <taxon>Equus</taxon>
    </lineage>
</organism>
<sequence length="11" mass="1349">RPKPQQFFGLM</sequence>
<keyword id="KW-0027">Amidation</keyword>
<keyword id="KW-0903">Direct protein sequencing</keyword>
<keyword id="KW-0527">Neuropeptide</keyword>
<keyword id="KW-0529">Neurotransmitter</keyword>
<keyword id="KW-1185">Reference proteome</keyword>
<keyword id="KW-0964">Secreted</keyword>
<gene>
    <name type="primary">TAC1</name>
    <name type="synonym">NKA</name>
    <name type="synonym">NKNA</name>
    <name type="synonym">TAC2</name>
</gene>
<evidence type="ECO:0000250" key="1">
    <source>
        <dbReference type="UniProtKB" id="P20366"/>
    </source>
</evidence>
<evidence type="ECO:0000269" key="2">
    <source ref="1"/>
</evidence>
<evidence type="ECO:0000305" key="3"/>
<accession>P67933</accession>
<accession>P01290</accession>
<name>TKNA_HORSE</name>
<dbReference type="PIR" id="A01558">
    <property type="entry name" value="SPHO"/>
</dbReference>
<dbReference type="InParanoid" id="P67933"/>
<dbReference type="Proteomes" id="UP000002281">
    <property type="component" value="Unplaced"/>
</dbReference>
<dbReference type="GO" id="GO:0005576">
    <property type="term" value="C:extracellular region"/>
    <property type="evidence" value="ECO:0007669"/>
    <property type="project" value="UniProtKB-SubCell"/>
</dbReference>
<dbReference type="GO" id="GO:0045202">
    <property type="term" value="C:synapse"/>
    <property type="evidence" value="ECO:0007669"/>
    <property type="project" value="GOC"/>
</dbReference>
<dbReference type="GO" id="GO:0007268">
    <property type="term" value="P:chemical synaptic transmission"/>
    <property type="evidence" value="ECO:0007669"/>
    <property type="project" value="UniProtKB-KW"/>
</dbReference>
<dbReference type="GO" id="GO:0007218">
    <property type="term" value="P:neuropeptide signaling pathway"/>
    <property type="evidence" value="ECO:0007669"/>
    <property type="project" value="UniProtKB-KW"/>
</dbReference>
<dbReference type="GO" id="GO:0007217">
    <property type="term" value="P:tachykinin receptor signaling pathway"/>
    <property type="evidence" value="ECO:0007669"/>
    <property type="project" value="InterPro"/>
</dbReference>
<dbReference type="InterPro" id="IPR013055">
    <property type="entry name" value="Tachy_Neuro_lke_CS"/>
</dbReference>
<dbReference type="InterPro" id="IPR008215">
    <property type="entry name" value="Tachykinin_dom"/>
</dbReference>
<dbReference type="Pfam" id="PF02202">
    <property type="entry name" value="Tachykinin"/>
    <property type="match status" value="1"/>
</dbReference>
<dbReference type="PROSITE" id="PS00267">
    <property type="entry name" value="TACHYKININ"/>
    <property type="match status" value="1"/>
</dbReference>
<reference key="1">
    <citation type="journal article" date="1973" name="Helv. Chim. Acta">
        <title>Isolation and amino-acid sequence of substance P from horse intestine.</title>
        <authorList>
            <person name="Studer R.O."/>
            <person name="Trzeciak A."/>
            <person name="Lergier W."/>
        </authorList>
    </citation>
    <scope>PROTEIN SEQUENCE</scope>
    <scope>AMIDATION AT MET-11</scope>
</reference>
<comment type="function">
    <text>Tachykinins are active peptides which excite neurons, evoke behavioral responses, are potent vasodilators and secretagogues, and contract (directly or indirectly) many smooth muscles.</text>
</comment>
<comment type="subcellular location">
    <subcellularLocation>
        <location>Secreted</location>
    </subcellularLocation>
</comment>
<comment type="PTM">
    <molecule>Substance P</molecule>
    <text evidence="1">The substance P form is cleaved at Pro-2 by the prolyl endopeptidase FAP (seprase) activity (in vitro). Substance P is also cleaved and degraded by Angiotensin-converting enzyme (ACE) and neprilysin (MME).</text>
</comment>
<comment type="similarity">
    <text evidence="3">Belongs to the tachykinin family.</text>
</comment>
<feature type="peptide" id="PRO_0000044420" description="Substance P">
    <location>
        <begin position="1"/>
        <end position="11"/>
    </location>
</feature>
<feature type="site" description="Cleavage; by FAP" evidence="1">
    <location>
        <begin position="2"/>
        <end position="3"/>
    </location>
</feature>
<feature type="site" description="Cleavage; by MME" evidence="1">
    <location>
        <begin position="6"/>
        <end position="7"/>
    </location>
</feature>
<feature type="site" description="Cleavage; by MME" evidence="1">
    <location>
        <begin position="7"/>
        <end position="8"/>
    </location>
</feature>
<feature type="site" description="Cleavage; by ACE" evidence="1">
    <location>
        <begin position="8"/>
        <end position="9"/>
    </location>
</feature>
<feature type="site" description="Cleavage; by ACE and MME" evidence="1">
    <location>
        <begin position="9"/>
        <end position="10"/>
    </location>
</feature>
<feature type="modified residue" description="Methionine amide" evidence="2">
    <location>
        <position position="11"/>
    </location>
</feature>
<protein>
    <recommendedName>
        <fullName>Substance P</fullName>
    </recommendedName>
</protein>